<sequence length="119" mass="13897">MVKLAFPRELRLLTPSHFTFVFQQPQRAGTPQITILGRMNSLGHPRIGLTVAKKHVKRAHERNRIKRLTRESFRLHQHSLPSMDFVVLVKKGVSELDNRTLTEALEKLWRRHCRLAPDC</sequence>
<reference key="1">
    <citation type="journal article" date="2004" name="Proc. Natl. Acad. Sci. U.S.A.">
        <title>Genome sequence of the enterobacterial phytopathogen Erwinia carotovora subsp. atroseptica and characterization of virulence factors.</title>
        <authorList>
            <person name="Bell K.S."/>
            <person name="Sebaihia M."/>
            <person name="Pritchard L."/>
            <person name="Holden M.T.G."/>
            <person name="Hyman L.J."/>
            <person name="Holeva M.C."/>
            <person name="Thomson N.R."/>
            <person name="Bentley S.D."/>
            <person name="Churcher L.J.C."/>
            <person name="Mungall K."/>
            <person name="Atkin R."/>
            <person name="Bason N."/>
            <person name="Brooks K."/>
            <person name="Chillingworth T."/>
            <person name="Clark K."/>
            <person name="Doggett J."/>
            <person name="Fraser A."/>
            <person name="Hance Z."/>
            <person name="Hauser H."/>
            <person name="Jagels K."/>
            <person name="Moule S."/>
            <person name="Norbertczak H."/>
            <person name="Ormond D."/>
            <person name="Price C."/>
            <person name="Quail M.A."/>
            <person name="Sanders M."/>
            <person name="Walker D."/>
            <person name="Whitehead S."/>
            <person name="Salmond G.P.C."/>
            <person name="Birch P.R.J."/>
            <person name="Parkhill J."/>
            <person name="Toth I.K."/>
        </authorList>
    </citation>
    <scope>NUCLEOTIDE SEQUENCE [LARGE SCALE GENOMIC DNA]</scope>
    <source>
        <strain>SCRI 1043 / ATCC BAA-672</strain>
    </source>
</reference>
<proteinExistence type="inferred from homology"/>
<accession>Q6CYR1</accession>
<keyword id="KW-0255">Endonuclease</keyword>
<keyword id="KW-0378">Hydrolase</keyword>
<keyword id="KW-0540">Nuclease</keyword>
<keyword id="KW-1185">Reference proteome</keyword>
<keyword id="KW-0694">RNA-binding</keyword>
<keyword id="KW-0819">tRNA processing</keyword>
<dbReference type="EC" id="3.1.26.5" evidence="1"/>
<dbReference type="EMBL" id="BX950851">
    <property type="protein sequence ID" value="CAG77340.1"/>
    <property type="molecule type" value="Genomic_DNA"/>
</dbReference>
<dbReference type="RefSeq" id="WP_011095902.1">
    <property type="nucleotide sequence ID" value="NC_004547.2"/>
</dbReference>
<dbReference type="SMR" id="Q6CYR1"/>
<dbReference type="STRING" id="218491.ECA4444"/>
<dbReference type="GeneID" id="57211135"/>
<dbReference type="KEGG" id="eca:ECA4444"/>
<dbReference type="eggNOG" id="COG0594">
    <property type="taxonomic scope" value="Bacteria"/>
</dbReference>
<dbReference type="HOGENOM" id="CLU_117179_11_0_6"/>
<dbReference type="OrthoDB" id="9796422at2"/>
<dbReference type="Proteomes" id="UP000007966">
    <property type="component" value="Chromosome"/>
</dbReference>
<dbReference type="GO" id="GO:0030677">
    <property type="term" value="C:ribonuclease P complex"/>
    <property type="evidence" value="ECO:0007669"/>
    <property type="project" value="TreeGrafter"/>
</dbReference>
<dbReference type="GO" id="GO:0042781">
    <property type="term" value="F:3'-tRNA processing endoribonuclease activity"/>
    <property type="evidence" value="ECO:0007669"/>
    <property type="project" value="TreeGrafter"/>
</dbReference>
<dbReference type="GO" id="GO:0004526">
    <property type="term" value="F:ribonuclease P activity"/>
    <property type="evidence" value="ECO:0007669"/>
    <property type="project" value="UniProtKB-UniRule"/>
</dbReference>
<dbReference type="GO" id="GO:0000049">
    <property type="term" value="F:tRNA binding"/>
    <property type="evidence" value="ECO:0007669"/>
    <property type="project" value="UniProtKB-UniRule"/>
</dbReference>
<dbReference type="GO" id="GO:0001682">
    <property type="term" value="P:tRNA 5'-leader removal"/>
    <property type="evidence" value="ECO:0007669"/>
    <property type="project" value="UniProtKB-UniRule"/>
</dbReference>
<dbReference type="FunFam" id="3.30.230.10:FF:000016">
    <property type="entry name" value="Ribonuclease P protein component"/>
    <property type="match status" value="1"/>
</dbReference>
<dbReference type="Gene3D" id="3.30.230.10">
    <property type="match status" value="1"/>
</dbReference>
<dbReference type="HAMAP" id="MF_00227">
    <property type="entry name" value="RNase_P"/>
    <property type="match status" value="1"/>
</dbReference>
<dbReference type="InterPro" id="IPR020568">
    <property type="entry name" value="Ribosomal_Su5_D2-typ_SF"/>
</dbReference>
<dbReference type="InterPro" id="IPR014721">
    <property type="entry name" value="Ribsml_uS5_D2-typ_fold_subgr"/>
</dbReference>
<dbReference type="InterPro" id="IPR000100">
    <property type="entry name" value="RNase_P"/>
</dbReference>
<dbReference type="InterPro" id="IPR020539">
    <property type="entry name" value="RNase_P_CS"/>
</dbReference>
<dbReference type="NCBIfam" id="TIGR00188">
    <property type="entry name" value="rnpA"/>
    <property type="match status" value="1"/>
</dbReference>
<dbReference type="PANTHER" id="PTHR33992">
    <property type="entry name" value="RIBONUCLEASE P PROTEIN COMPONENT"/>
    <property type="match status" value="1"/>
</dbReference>
<dbReference type="PANTHER" id="PTHR33992:SF1">
    <property type="entry name" value="RIBONUCLEASE P PROTEIN COMPONENT"/>
    <property type="match status" value="1"/>
</dbReference>
<dbReference type="Pfam" id="PF00825">
    <property type="entry name" value="Ribonuclease_P"/>
    <property type="match status" value="1"/>
</dbReference>
<dbReference type="SUPFAM" id="SSF54211">
    <property type="entry name" value="Ribosomal protein S5 domain 2-like"/>
    <property type="match status" value="1"/>
</dbReference>
<dbReference type="PROSITE" id="PS00648">
    <property type="entry name" value="RIBONUCLEASE_P"/>
    <property type="match status" value="1"/>
</dbReference>
<gene>
    <name evidence="1" type="primary">rnpA</name>
    <name type="ordered locus">ECA4444</name>
</gene>
<protein>
    <recommendedName>
        <fullName evidence="1">Ribonuclease P protein component</fullName>
        <shortName evidence="1">RNase P protein</shortName>
        <shortName evidence="1">RNaseP protein</shortName>
        <ecNumber evidence="1">3.1.26.5</ecNumber>
    </recommendedName>
    <alternativeName>
        <fullName evidence="1">Protein C5</fullName>
    </alternativeName>
</protein>
<feature type="chain" id="PRO_0000198462" description="Ribonuclease P protein component">
    <location>
        <begin position="1"/>
        <end position="119"/>
    </location>
</feature>
<comment type="function">
    <text evidence="1">RNaseP catalyzes the removal of the 5'-leader sequence from pre-tRNA to produce the mature 5'-terminus. It can also cleave other RNA substrates such as 4.5S RNA. The protein component plays an auxiliary but essential role in vivo by binding to the 5'-leader sequence and broadening the substrate specificity of the ribozyme.</text>
</comment>
<comment type="catalytic activity">
    <reaction evidence="1">
        <text>Endonucleolytic cleavage of RNA, removing 5'-extranucleotides from tRNA precursor.</text>
        <dbReference type="EC" id="3.1.26.5"/>
    </reaction>
</comment>
<comment type="subunit">
    <text evidence="1">Consists of a catalytic RNA component (M1 or rnpB) and a protein subunit.</text>
</comment>
<comment type="similarity">
    <text evidence="1">Belongs to the RnpA family.</text>
</comment>
<name>RNPA_PECAS</name>
<organism>
    <name type="scientific">Pectobacterium atrosepticum (strain SCRI 1043 / ATCC BAA-672)</name>
    <name type="common">Erwinia carotovora subsp. atroseptica</name>
    <dbReference type="NCBI Taxonomy" id="218491"/>
    <lineage>
        <taxon>Bacteria</taxon>
        <taxon>Pseudomonadati</taxon>
        <taxon>Pseudomonadota</taxon>
        <taxon>Gammaproteobacteria</taxon>
        <taxon>Enterobacterales</taxon>
        <taxon>Pectobacteriaceae</taxon>
        <taxon>Pectobacterium</taxon>
    </lineage>
</organism>
<evidence type="ECO:0000255" key="1">
    <source>
        <dbReference type="HAMAP-Rule" id="MF_00227"/>
    </source>
</evidence>